<protein>
    <recommendedName>
        <fullName>Inhibitor of Apoptosis OPG037</fullName>
    </recommendedName>
    <alternativeName>
        <fullName>Ankyrin repeat protein M1</fullName>
    </alternativeName>
</protein>
<name>PG037_VACCW</name>
<keyword id="KW-0040">ANK repeat</keyword>
<keyword id="KW-0244">Early protein</keyword>
<keyword id="KW-1035">Host cytoplasm</keyword>
<keyword id="KW-0945">Host-virus interaction</keyword>
<keyword id="KW-1119">Modulation of host cell apoptosis by virus</keyword>
<keyword id="KW-1185">Reference proteome</keyword>
<keyword id="KW-0677">Repeat</keyword>
<dbReference type="EMBL" id="M20779">
    <property type="status" value="NOT_ANNOTATED_CDS"/>
    <property type="molecule type" value="Genomic_DNA"/>
</dbReference>
<dbReference type="EMBL" id="AY243312">
    <property type="protein sequence ID" value="AAO89309.1"/>
    <property type="molecule type" value="Genomic_DNA"/>
</dbReference>
<dbReference type="EMBL" id="M23701">
    <property type="protein sequence ID" value="AAA69591.1"/>
    <property type="molecule type" value="Genomic_DNA"/>
</dbReference>
<dbReference type="PIR" id="A29196">
    <property type="entry name" value="FOVZM1"/>
</dbReference>
<dbReference type="RefSeq" id="YP_232912.1">
    <property type="nucleotide sequence ID" value="NC_006998.1"/>
</dbReference>
<dbReference type="SMR" id="P14356"/>
<dbReference type="DNASU" id="3707645"/>
<dbReference type="GeneID" id="3707645"/>
<dbReference type="KEGG" id="vg:3707645"/>
<dbReference type="Proteomes" id="UP000000344">
    <property type="component" value="Genome"/>
</dbReference>
<dbReference type="GO" id="GO:0030430">
    <property type="term" value="C:host cell cytoplasm"/>
    <property type="evidence" value="ECO:0007669"/>
    <property type="project" value="UniProtKB-SubCell"/>
</dbReference>
<dbReference type="GO" id="GO:0052150">
    <property type="term" value="P:symbiont-mediated perturbation of host apoptosis"/>
    <property type="evidence" value="ECO:0007669"/>
    <property type="project" value="UniProtKB-KW"/>
</dbReference>
<dbReference type="Gene3D" id="1.25.40.20">
    <property type="entry name" value="Ankyrin repeat-containing domain"/>
    <property type="match status" value="1"/>
</dbReference>
<dbReference type="InterPro" id="IPR002110">
    <property type="entry name" value="Ankyrin_rpt"/>
</dbReference>
<dbReference type="InterPro" id="IPR036770">
    <property type="entry name" value="Ankyrin_rpt-contain_sf"/>
</dbReference>
<dbReference type="PANTHER" id="PTHR24198">
    <property type="entry name" value="ANKYRIN REPEAT AND PROTEIN KINASE DOMAIN-CONTAINING PROTEIN"/>
    <property type="match status" value="1"/>
</dbReference>
<dbReference type="PANTHER" id="PTHR24198:SF165">
    <property type="entry name" value="ANKYRIN REPEAT-CONTAINING PROTEIN-RELATED"/>
    <property type="match status" value="1"/>
</dbReference>
<dbReference type="Pfam" id="PF00023">
    <property type="entry name" value="Ank"/>
    <property type="match status" value="1"/>
</dbReference>
<dbReference type="Pfam" id="PF12796">
    <property type="entry name" value="Ank_2"/>
    <property type="match status" value="1"/>
</dbReference>
<dbReference type="SMART" id="SM00248">
    <property type="entry name" value="ANK"/>
    <property type="match status" value="7"/>
</dbReference>
<dbReference type="SUPFAM" id="SSF48403">
    <property type="entry name" value="Ankyrin repeat"/>
    <property type="match status" value="2"/>
</dbReference>
<dbReference type="PROSITE" id="PS50297">
    <property type="entry name" value="ANK_REP_REGION"/>
    <property type="match status" value="1"/>
</dbReference>
<dbReference type="PROSITE" id="PS50088">
    <property type="entry name" value="ANK_REPEAT"/>
    <property type="match status" value="1"/>
</dbReference>
<gene>
    <name type="primary">OPG037</name>
    <name type="synonym">M1L</name>
    <name type="ORF">VACWR030</name>
</gene>
<proteinExistence type="evidence at protein level"/>
<accession>P14356</accession>
<accession>Q80HY3</accession>
<accession>Q85333</accession>
<reference key="1">
    <citation type="journal article" date="1988" name="Virology">
        <title>Nucleotide sequence and molecular genetic analysis of the vaccinia virus HindIII N/M region encoding the genes responsible for resistance to alpha-amanitin.</title>
        <authorList>
            <person name="Tamin A."/>
            <person name="Villarreal E.C."/>
            <person name="Weinrich S.L."/>
            <person name="Hruby D.E."/>
        </authorList>
    </citation>
    <scope>NUCLEOTIDE SEQUENCE [GENOMIC DNA]</scope>
</reference>
<reference key="2">
    <citation type="submission" date="2003-02" db="EMBL/GenBank/DDBJ databases">
        <title>Sequencing of the coding region of Vaccinia-WR to an average 9-fold redundancy and an error rate of 0.16/10kb.</title>
        <authorList>
            <person name="Esposito J.J."/>
            <person name="Frace A.M."/>
            <person name="Sammons S.A."/>
            <person name="Olsen-Rasmussen M."/>
            <person name="Osborne J."/>
            <person name="Wohlhueter R."/>
        </authorList>
    </citation>
    <scope>NUCLEOTIDE SEQUENCE [LARGE SCALE GENOMIC DNA]</scope>
</reference>
<reference key="3">
    <citation type="journal article" date="1988" name="Virology">
        <title>Analysis of a large cluster of nonessential genes deleted from a vaccinia virus terminal transposition mutant.</title>
        <authorList>
            <person name="Kotwal G.J."/>
            <person name="Moss B."/>
        </authorList>
    </citation>
    <scope>NUCLEOTIDE SEQUENCE [GENOMIC DNA] OF 202-421</scope>
</reference>
<reference key="4">
    <citation type="journal article" date="2017" name="J. Virol.">
        <title>Vaccinia Virus Encodes a Novel Inhibitor of Apoptosis That Associates with the Apoptosome.</title>
        <authorList>
            <person name="Ryerson M.R."/>
            <person name="Richards M.M."/>
            <person name="Kvansakul M."/>
            <person name="Hawkins C.J."/>
            <person name="Shisler J.L."/>
        </authorList>
    </citation>
    <scope>FUNCTION</scope>
    <scope>SUBUNIT</scope>
    <scope>SUBCELLULAR LOCATION</scope>
</reference>
<reference key="5">
    <citation type="journal article" date="2015" name="J. Virol.">
        <title>Deciphering poxvirus gene expression by RNA sequencing and ribosome profiling.</title>
        <authorList>
            <person name="Yang Z."/>
            <person name="Cao S."/>
            <person name="Martens C.A."/>
            <person name="Porcella S.F."/>
            <person name="Xie Z."/>
            <person name="Ma M."/>
            <person name="Shen B."/>
            <person name="Moss B."/>
        </authorList>
    </citation>
    <scope>INDUCTION</scope>
</reference>
<sequence>MIFVIESKLLQIYRNRNRNINFYTTMDNIMSAEYYLSLYAKYNSKNLDVFRNMLQAIEPSGNNYHILHAYCGIKGLDERFVEELLHRGYSPNETDDDGNYPLHIASKINNNRIVAMLLTHGADPNACDKHNKTPLYYLSGTDDEVIERINLLVQYGAKINNSVDEEGCGPLLACTDPSERVFKKIMSIGFEARIVDKFGKNHIHRHLMSDNPKASTISWMMKLGISPSKPDHDGNTPLHIVCSKTVKNVDIIDLLLPSTDVNKQNKFGDSPLTLLIKTLSPAHLINKLLSTSNVITDQTVNICIFYDRDDVLEIINDKGKQYDSTDFKMAVEVGSIRCVKYLLDNDIICEDAMYYAVLSEYETMVDYLLFNHFSVDFVVNGHTCMSECVRLNNPVILSKLMLHNPTSETMYLTMKAIEKDRLDKSIIIPFIAYFVLMHPDFCKNRRYFTSYKRFVTDYVHEGVSYEVFDDYF</sequence>
<organism>
    <name type="scientific">Vaccinia virus (strain Western Reserve)</name>
    <name type="common">VACV</name>
    <name type="synonym">Vaccinia virus (strain WR)</name>
    <dbReference type="NCBI Taxonomy" id="10254"/>
    <lineage>
        <taxon>Viruses</taxon>
        <taxon>Varidnaviria</taxon>
        <taxon>Bamfordvirae</taxon>
        <taxon>Nucleocytoviricota</taxon>
        <taxon>Pokkesviricetes</taxon>
        <taxon>Chitovirales</taxon>
        <taxon>Poxviridae</taxon>
        <taxon>Chordopoxvirinae</taxon>
        <taxon>Orthopoxvirus</taxon>
        <taxon>Vaccinia virus</taxon>
    </lineage>
</organism>
<comment type="function">
    <text evidence="2">Inhibits host apoptosis. Acts by associating with host apoptosome.</text>
</comment>
<comment type="subunit">
    <text evidence="2">May interact with host caspase-9-Apaf-1 complex.</text>
</comment>
<comment type="subcellular location">
    <subcellularLocation>
        <location evidence="2">Host cytoplasm</location>
    </subcellularLocation>
</comment>
<comment type="induction">
    <text evidence="1">Expressed in the early phase of the viral replicative cycle.</text>
</comment>
<comment type="similarity">
    <text evidence="3">Belongs to the orthopoxvirus OPG037 protein family.</text>
</comment>
<feature type="chain" id="PRO_0000067099" description="Inhibitor of Apoptosis OPG037">
    <location>
        <begin position="1"/>
        <end position="472"/>
    </location>
</feature>
<feature type="repeat" description="ANK 1">
    <location>
        <begin position="97"/>
        <end position="126"/>
    </location>
</feature>
<feature type="repeat" description="ANK 2">
    <location>
        <begin position="130"/>
        <end position="161"/>
    </location>
</feature>
<feature type="repeat" description="ANK 3">
    <location>
        <begin position="233"/>
        <end position="263"/>
    </location>
</feature>
<feature type="repeat" description="ANK 4">
    <location>
        <begin position="267"/>
        <end position="297"/>
    </location>
</feature>
<feature type="repeat" description="ANK 5">
    <location>
        <begin position="322"/>
        <end position="351"/>
    </location>
</feature>
<feature type="repeat" description="ANK 6">
    <location>
        <begin position="353"/>
        <end position="377"/>
    </location>
</feature>
<feature type="sequence conflict" description="In Ref. 1; AAO89309." evidence="3" ref="1">
    <original>V</original>
    <variation>VE</variation>
    <location>
        <position position="81"/>
    </location>
</feature>
<organismHost>
    <name type="scientific">Bos taurus</name>
    <name type="common">Bovine</name>
    <dbReference type="NCBI Taxonomy" id="9913"/>
</organismHost>
<evidence type="ECO:0000269" key="1">
    <source>
    </source>
</evidence>
<evidence type="ECO:0000269" key="2">
    <source>
    </source>
</evidence>
<evidence type="ECO:0000305" key="3"/>